<feature type="chain" id="PRO_0000075058" description="Alanine--tRNA ligase">
    <location>
        <begin position="1"/>
        <end position="880"/>
    </location>
</feature>
<feature type="binding site" evidence="1">
    <location>
        <position position="567"/>
    </location>
    <ligand>
        <name>Zn(2+)</name>
        <dbReference type="ChEBI" id="CHEBI:29105"/>
    </ligand>
</feature>
<feature type="binding site" evidence="1">
    <location>
        <position position="571"/>
    </location>
    <ligand>
        <name>Zn(2+)</name>
        <dbReference type="ChEBI" id="CHEBI:29105"/>
    </ligand>
</feature>
<feature type="binding site" evidence="1">
    <location>
        <position position="669"/>
    </location>
    <ligand>
        <name>Zn(2+)</name>
        <dbReference type="ChEBI" id="CHEBI:29105"/>
    </ligand>
</feature>
<feature type="binding site" evidence="1">
    <location>
        <position position="673"/>
    </location>
    <ligand>
        <name>Zn(2+)</name>
        <dbReference type="ChEBI" id="CHEBI:29105"/>
    </ligand>
</feature>
<evidence type="ECO:0000255" key="1">
    <source>
        <dbReference type="HAMAP-Rule" id="MF_00036"/>
    </source>
</evidence>
<accession>Q6HDD7</accession>
<comment type="function">
    <text evidence="1">Catalyzes the attachment of alanine to tRNA(Ala) in a two-step reaction: alanine is first activated by ATP to form Ala-AMP and then transferred to the acceptor end of tRNA(Ala). Also edits incorrectly charged Ser-tRNA(Ala) and Gly-tRNA(Ala) via its editing domain.</text>
</comment>
<comment type="catalytic activity">
    <reaction evidence="1">
        <text>tRNA(Ala) + L-alanine + ATP = L-alanyl-tRNA(Ala) + AMP + diphosphate</text>
        <dbReference type="Rhea" id="RHEA:12540"/>
        <dbReference type="Rhea" id="RHEA-COMP:9657"/>
        <dbReference type="Rhea" id="RHEA-COMP:9923"/>
        <dbReference type="ChEBI" id="CHEBI:30616"/>
        <dbReference type="ChEBI" id="CHEBI:33019"/>
        <dbReference type="ChEBI" id="CHEBI:57972"/>
        <dbReference type="ChEBI" id="CHEBI:78442"/>
        <dbReference type="ChEBI" id="CHEBI:78497"/>
        <dbReference type="ChEBI" id="CHEBI:456215"/>
        <dbReference type="EC" id="6.1.1.7"/>
    </reaction>
</comment>
<comment type="cofactor">
    <cofactor evidence="1">
        <name>Zn(2+)</name>
        <dbReference type="ChEBI" id="CHEBI:29105"/>
    </cofactor>
    <text evidence="1">Binds 1 zinc ion per subunit.</text>
</comment>
<comment type="subcellular location">
    <subcellularLocation>
        <location evidence="1">Cytoplasm</location>
    </subcellularLocation>
</comment>
<comment type="domain">
    <text evidence="1">Consists of three domains; the N-terminal catalytic domain, the editing domain and the C-terminal C-Ala domain. The editing domain removes incorrectly charged amino acids, while the C-Ala domain, along with tRNA(Ala), serves as a bridge to cooperatively bring together the editing and aminoacylation centers thus stimulating deacylation of misacylated tRNAs.</text>
</comment>
<comment type="similarity">
    <text evidence="1">Belongs to the class-II aminoacyl-tRNA synthetase family.</text>
</comment>
<dbReference type="EC" id="6.1.1.7" evidence="1"/>
<dbReference type="EMBL" id="AE017355">
    <property type="protein sequence ID" value="AAT63904.1"/>
    <property type="molecule type" value="Genomic_DNA"/>
</dbReference>
<dbReference type="RefSeq" id="WP_000811842.1">
    <property type="nucleotide sequence ID" value="NC_005957.1"/>
</dbReference>
<dbReference type="RefSeq" id="YP_038439.1">
    <property type="nucleotide sequence ID" value="NC_005957.1"/>
</dbReference>
<dbReference type="SMR" id="Q6HDD7"/>
<dbReference type="KEGG" id="btk:BT9727_4121"/>
<dbReference type="PATRIC" id="fig|281309.8.peg.4398"/>
<dbReference type="HOGENOM" id="CLU_004485_1_1_9"/>
<dbReference type="Proteomes" id="UP000001301">
    <property type="component" value="Chromosome"/>
</dbReference>
<dbReference type="GO" id="GO:0005829">
    <property type="term" value="C:cytosol"/>
    <property type="evidence" value="ECO:0007669"/>
    <property type="project" value="TreeGrafter"/>
</dbReference>
<dbReference type="GO" id="GO:0004813">
    <property type="term" value="F:alanine-tRNA ligase activity"/>
    <property type="evidence" value="ECO:0007669"/>
    <property type="project" value="UniProtKB-UniRule"/>
</dbReference>
<dbReference type="GO" id="GO:0002161">
    <property type="term" value="F:aminoacyl-tRNA deacylase activity"/>
    <property type="evidence" value="ECO:0007669"/>
    <property type="project" value="TreeGrafter"/>
</dbReference>
<dbReference type="GO" id="GO:0005524">
    <property type="term" value="F:ATP binding"/>
    <property type="evidence" value="ECO:0007669"/>
    <property type="project" value="UniProtKB-UniRule"/>
</dbReference>
<dbReference type="GO" id="GO:0140096">
    <property type="term" value="F:catalytic activity, acting on a protein"/>
    <property type="evidence" value="ECO:0007669"/>
    <property type="project" value="UniProtKB-ARBA"/>
</dbReference>
<dbReference type="GO" id="GO:0016740">
    <property type="term" value="F:transferase activity"/>
    <property type="evidence" value="ECO:0007669"/>
    <property type="project" value="UniProtKB-ARBA"/>
</dbReference>
<dbReference type="GO" id="GO:0000049">
    <property type="term" value="F:tRNA binding"/>
    <property type="evidence" value="ECO:0007669"/>
    <property type="project" value="UniProtKB-KW"/>
</dbReference>
<dbReference type="GO" id="GO:0008270">
    <property type="term" value="F:zinc ion binding"/>
    <property type="evidence" value="ECO:0007669"/>
    <property type="project" value="UniProtKB-UniRule"/>
</dbReference>
<dbReference type="GO" id="GO:0006419">
    <property type="term" value="P:alanyl-tRNA aminoacylation"/>
    <property type="evidence" value="ECO:0007669"/>
    <property type="project" value="UniProtKB-UniRule"/>
</dbReference>
<dbReference type="CDD" id="cd00673">
    <property type="entry name" value="AlaRS_core"/>
    <property type="match status" value="1"/>
</dbReference>
<dbReference type="FunFam" id="2.40.30.130:FF:000001">
    <property type="entry name" value="Alanine--tRNA ligase"/>
    <property type="match status" value="1"/>
</dbReference>
<dbReference type="FunFam" id="3.10.310.40:FF:000001">
    <property type="entry name" value="Alanine--tRNA ligase"/>
    <property type="match status" value="1"/>
</dbReference>
<dbReference type="FunFam" id="3.30.54.20:FF:000001">
    <property type="entry name" value="Alanine--tRNA ligase"/>
    <property type="match status" value="1"/>
</dbReference>
<dbReference type="FunFam" id="3.30.930.10:FF:000046">
    <property type="entry name" value="Alanine--tRNA ligase"/>
    <property type="match status" value="1"/>
</dbReference>
<dbReference type="FunFam" id="3.30.980.10:FF:000004">
    <property type="entry name" value="Alanine--tRNA ligase, cytoplasmic"/>
    <property type="match status" value="1"/>
</dbReference>
<dbReference type="Gene3D" id="2.40.30.130">
    <property type="match status" value="1"/>
</dbReference>
<dbReference type="Gene3D" id="3.10.310.40">
    <property type="match status" value="1"/>
</dbReference>
<dbReference type="Gene3D" id="3.30.54.20">
    <property type="match status" value="1"/>
</dbReference>
<dbReference type="Gene3D" id="6.10.250.550">
    <property type="match status" value="1"/>
</dbReference>
<dbReference type="Gene3D" id="3.30.930.10">
    <property type="entry name" value="Bira Bifunctional Protein, Domain 2"/>
    <property type="match status" value="1"/>
</dbReference>
<dbReference type="Gene3D" id="3.30.980.10">
    <property type="entry name" value="Threonyl-trna Synthetase, Chain A, domain 2"/>
    <property type="match status" value="1"/>
</dbReference>
<dbReference type="HAMAP" id="MF_00036_B">
    <property type="entry name" value="Ala_tRNA_synth_B"/>
    <property type="match status" value="1"/>
</dbReference>
<dbReference type="InterPro" id="IPR045864">
    <property type="entry name" value="aa-tRNA-synth_II/BPL/LPL"/>
</dbReference>
<dbReference type="InterPro" id="IPR002318">
    <property type="entry name" value="Ala-tRNA-lgiase_IIc"/>
</dbReference>
<dbReference type="InterPro" id="IPR018162">
    <property type="entry name" value="Ala-tRNA-ligase_IIc_anticod-bd"/>
</dbReference>
<dbReference type="InterPro" id="IPR018165">
    <property type="entry name" value="Ala-tRNA-synth_IIc_core"/>
</dbReference>
<dbReference type="InterPro" id="IPR018164">
    <property type="entry name" value="Ala-tRNA-synth_IIc_N"/>
</dbReference>
<dbReference type="InterPro" id="IPR050058">
    <property type="entry name" value="Ala-tRNA_ligase"/>
</dbReference>
<dbReference type="InterPro" id="IPR023033">
    <property type="entry name" value="Ala_tRNA_ligase_euk/bac"/>
</dbReference>
<dbReference type="InterPro" id="IPR003156">
    <property type="entry name" value="DHHA1_dom"/>
</dbReference>
<dbReference type="InterPro" id="IPR018163">
    <property type="entry name" value="Thr/Ala-tRNA-synth_IIc_edit"/>
</dbReference>
<dbReference type="InterPro" id="IPR009000">
    <property type="entry name" value="Transl_B-barrel_sf"/>
</dbReference>
<dbReference type="InterPro" id="IPR012947">
    <property type="entry name" value="tRNA_SAD"/>
</dbReference>
<dbReference type="NCBIfam" id="TIGR00344">
    <property type="entry name" value="alaS"/>
    <property type="match status" value="1"/>
</dbReference>
<dbReference type="PANTHER" id="PTHR11777:SF9">
    <property type="entry name" value="ALANINE--TRNA LIGASE, CYTOPLASMIC"/>
    <property type="match status" value="1"/>
</dbReference>
<dbReference type="PANTHER" id="PTHR11777">
    <property type="entry name" value="ALANYL-TRNA SYNTHETASE"/>
    <property type="match status" value="1"/>
</dbReference>
<dbReference type="Pfam" id="PF02272">
    <property type="entry name" value="DHHA1"/>
    <property type="match status" value="1"/>
</dbReference>
<dbReference type="Pfam" id="PF01411">
    <property type="entry name" value="tRNA-synt_2c"/>
    <property type="match status" value="1"/>
</dbReference>
<dbReference type="Pfam" id="PF07973">
    <property type="entry name" value="tRNA_SAD"/>
    <property type="match status" value="1"/>
</dbReference>
<dbReference type="PRINTS" id="PR00980">
    <property type="entry name" value="TRNASYNTHALA"/>
</dbReference>
<dbReference type="SMART" id="SM00863">
    <property type="entry name" value="tRNA_SAD"/>
    <property type="match status" value="1"/>
</dbReference>
<dbReference type="SUPFAM" id="SSF55681">
    <property type="entry name" value="Class II aaRS and biotin synthetases"/>
    <property type="match status" value="1"/>
</dbReference>
<dbReference type="SUPFAM" id="SSF101353">
    <property type="entry name" value="Putative anticodon-binding domain of alanyl-tRNA synthetase (AlaRS)"/>
    <property type="match status" value="1"/>
</dbReference>
<dbReference type="SUPFAM" id="SSF55186">
    <property type="entry name" value="ThrRS/AlaRS common domain"/>
    <property type="match status" value="1"/>
</dbReference>
<dbReference type="SUPFAM" id="SSF50447">
    <property type="entry name" value="Translation proteins"/>
    <property type="match status" value="1"/>
</dbReference>
<dbReference type="PROSITE" id="PS50860">
    <property type="entry name" value="AA_TRNA_LIGASE_II_ALA"/>
    <property type="match status" value="1"/>
</dbReference>
<keyword id="KW-0030">Aminoacyl-tRNA synthetase</keyword>
<keyword id="KW-0067">ATP-binding</keyword>
<keyword id="KW-0963">Cytoplasm</keyword>
<keyword id="KW-0436">Ligase</keyword>
<keyword id="KW-0479">Metal-binding</keyword>
<keyword id="KW-0547">Nucleotide-binding</keyword>
<keyword id="KW-0648">Protein biosynthesis</keyword>
<keyword id="KW-0694">RNA-binding</keyword>
<keyword id="KW-0820">tRNA-binding</keyword>
<keyword id="KW-0862">Zinc</keyword>
<name>SYA_BACHK</name>
<protein>
    <recommendedName>
        <fullName evidence="1">Alanine--tRNA ligase</fullName>
        <ecNumber evidence="1">6.1.1.7</ecNumber>
    </recommendedName>
    <alternativeName>
        <fullName evidence="1">Alanyl-tRNA synthetase</fullName>
        <shortName evidence="1">AlaRS</shortName>
    </alternativeName>
</protein>
<sequence length="880" mass="97405">MKQLTGAQIRQMFLDFFQEKGHAVEPSASLVPHEDPSLLWINSGVATLKKYFDGRVIPQNPRITNAQKSIRTNDIENVGKTARHHTFFEMLGNFSIGDYFKEEAITWAWEFLTSDKWIGFDKELLSVTIHPEDEEAFTIWNEKMGVPKERIIRLEENFWDIGEGPSGPNTEIFYDRGEAYGNDFSDPELYPGGENERYLEVWNLVFSQFNHNPDGSYTPLPKKNIDTGMGLERMTSIVQDVPTNFDTDLFMPMIGATETISGEKYRNGDLEKDMAFKVIADHIRTVTFAVGDGALPSNEGRGYVLRRLLRRAVRYSKKLNINRPFMFELVPVVGEVMKDFYPEVLEKKDFIAKVVKNEEERFHETLHDGEAILAEVIAKAKEEKTTVISGVDAFRLYDTYGFPIELTEEYAEEAGMTVDQEGFENEMEKQRERARAARQDVDSMQVQGGVLGEVKVASEFVGYGTVATESNVVALVKNGEYTDSLQAGEEGQLMLNVTPFYAESGGQIADRGYLLADGVKVLVKDVQKAPNGQNLHKVVVEEGTLTKDAAVKAIIDTKNRGSVVKNHTATHLLHQALKDVLGTHVNQAGSLVTSERLRFDFSHFGQVQADELEKIERIVNEKIWESIDVEISQKAIEEAKEMGAMALFGEKYGDVVRVVQVGDYSLELCGGCHVDNTASIGIFKIVAESGIGAGTRRIEAVTGKSAYELMNDQVGLLKEAAGKMKTNPKDILTRVDGLFAEVKQLQKENESLAAKLSNIEAGNLTDSVMTVDGVNVLAAKVNVADMNNLRTMMDDLKNKLESAVVVLASVNDDKVNILAGVTKDLISQGYHAGKLVKEVASRCGGGGGGRPDMAQAGGKNPAQVEEALAFVQEYVKSVSK</sequence>
<organism>
    <name type="scientific">Bacillus thuringiensis subsp. konkukian (strain 97-27)</name>
    <dbReference type="NCBI Taxonomy" id="281309"/>
    <lineage>
        <taxon>Bacteria</taxon>
        <taxon>Bacillati</taxon>
        <taxon>Bacillota</taxon>
        <taxon>Bacilli</taxon>
        <taxon>Bacillales</taxon>
        <taxon>Bacillaceae</taxon>
        <taxon>Bacillus</taxon>
        <taxon>Bacillus cereus group</taxon>
    </lineage>
</organism>
<reference key="1">
    <citation type="journal article" date="2006" name="J. Bacteriol.">
        <title>Pathogenomic sequence analysis of Bacillus cereus and Bacillus thuringiensis isolates closely related to Bacillus anthracis.</title>
        <authorList>
            <person name="Han C.S."/>
            <person name="Xie G."/>
            <person name="Challacombe J.F."/>
            <person name="Altherr M.R."/>
            <person name="Bhotika S.S."/>
            <person name="Bruce D."/>
            <person name="Campbell C.S."/>
            <person name="Campbell M.L."/>
            <person name="Chen J."/>
            <person name="Chertkov O."/>
            <person name="Cleland C."/>
            <person name="Dimitrijevic M."/>
            <person name="Doggett N.A."/>
            <person name="Fawcett J.J."/>
            <person name="Glavina T."/>
            <person name="Goodwin L.A."/>
            <person name="Hill K.K."/>
            <person name="Hitchcock P."/>
            <person name="Jackson P.J."/>
            <person name="Keim P."/>
            <person name="Kewalramani A.R."/>
            <person name="Longmire J."/>
            <person name="Lucas S."/>
            <person name="Malfatti S."/>
            <person name="McMurry K."/>
            <person name="Meincke L.J."/>
            <person name="Misra M."/>
            <person name="Moseman B.L."/>
            <person name="Mundt M."/>
            <person name="Munk A.C."/>
            <person name="Okinaka R.T."/>
            <person name="Parson-Quintana B."/>
            <person name="Reilly L.P."/>
            <person name="Richardson P."/>
            <person name="Robinson D.L."/>
            <person name="Rubin E."/>
            <person name="Saunders E."/>
            <person name="Tapia R."/>
            <person name="Tesmer J.G."/>
            <person name="Thayer N."/>
            <person name="Thompson L.S."/>
            <person name="Tice H."/>
            <person name="Ticknor L.O."/>
            <person name="Wills P.L."/>
            <person name="Brettin T.S."/>
            <person name="Gilna P."/>
        </authorList>
    </citation>
    <scope>NUCLEOTIDE SEQUENCE [LARGE SCALE GENOMIC DNA]</scope>
    <source>
        <strain>97-27</strain>
    </source>
</reference>
<gene>
    <name evidence="1" type="primary">alaS</name>
    <name type="ordered locus">BT9727_4121</name>
</gene>
<proteinExistence type="inferred from homology"/>